<organism>
    <name type="scientific">Saccharomyces cerevisiae (strain ATCC 204508 / S288c)</name>
    <name type="common">Baker's yeast</name>
    <dbReference type="NCBI Taxonomy" id="559292"/>
    <lineage>
        <taxon>Eukaryota</taxon>
        <taxon>Fungi</taxon>
        <taxon>Dikarya</taxon>
        <taxon>Ascomycota</taxon>
        <taxon>Saccharomycotina</taxon>
        <taxon>Saccharomycetes</taxon>
        <taxon>Saccharomycetales</taxon>
        <taxon>Saccharomycetaceae</taxon>
        <taxon>Saccharomyces</taxon>
    </lineage>
</organism>
<keyword id="KW-0963">Cytoplasm</keyword>
<keyword id="KW-0597">Phosphoprotein</keyword>
<keyword id="KW-1185">Reference proteome</keyword>
<dbReference type="EMBL" id="U51032">
    <property type="protein sequence ID" value="AAB64769.1"/>
    <property type="molecule type" value="Genomic_DNA"/>
</dbReference>
<dbReference type="EMBL" id="BK006938">
    <property type="protein sequence ID" value="DAA12175.1"/>
    <property type="molecule type" value="Genomic_DNA"/>
</dbReference>
<dbReference type="PIR" id="S70098">
    <property type="entry name" value="S70098"/>
</dbReference>
<dbReference type="RefSeq" id="NP_010620.3">
    <property type="nucleotide sequence ID" value="NM_001180641.3"/>
</dbReference>
<dbReference type="BioGRID" id="32390">
    <property type="interactions" value="123"/>
</dbReference>
<dbReference type="ComplexPortal" id="CPX-3265">
    <property type="entry name" value="Ribosome quality control complex"/>
</dbReference>
<dbReference type="DIP" id="DIP-4004N"/>
<dbReference type="FunCoup" id="Q05468">
    <property type="interactions" value="82"/>
</dbReference>
<dbReference type="IntAct" id="Q05468">
    <property type="interactions" value="53"/>
</dbReference>
<dbReference type="STRING" id="4932.YDR333C"/>
<dbReference type="iPTMnet" id="Q05468"/>
<dbReference type="PaxDb" id="4932-YDR333C"/>
<dbReference type="PeptideAtlas" id="Q05468"/>
<dbReference type="EnsemblFungi" id="YDR333C_mRNA">
    <property type="protein sequence ID" value="YDR333C"/>
    <property type="gene ID" value="YDR333C"/>
</dbReference>
<dbReference type="GeneID" id="851933"/>
<dbReference type="KEGG" id="sce:YDR333C"/>
<dbReference type="AGR" id="SGD:S000002741"/>
<dbReference type="SGD" id="S000002741">
    <property type="gene designation" value="RQC1"/>
</dbReference>
<dbReference type="VEuPathDB" id="FungiDB:YDR333C"/>
<dbReference type="eggNOG" id="KOG2422">
    <property type="taxonomic scope" value="Eukaryota"/>
</dbReference>
<dbReference type="GeneTree" id="ENSGT00390000005563"/>
<dbReference type="HOGENOM" id="CLU_008321_1_1_1"/>
<dbReference type="InParanoid" id="Q05468"/>
<dbReference type="OMA" id="LEDPLGC"/>
<dbReference type="OrthoDB" id="205993at2759"/>
<dbReference type="BioCyc" id="YEAST:G3O-29889-MONOMER"/>
<dbReference type="BioGRID-ORCS" id="851933">
    <property type="hits" value="0 hits in 10 CRISPR screens"/>
</dbReference>
<dbReference type="PRO" id="PR:Q05468"/>
<dbReference type="Proteomes" id="UP000002311">
    <property type="component" value="Chromosome IV"/>
</dbReference>
<dbReference type="RNAct" id="Q05468">
    <property type="molecule type" value="protein"/>
</dbReference>
<dbReference type="GO" id="GO:0005737">
    <property type="term" value="C:cytoplasm"/>
    <property type="evidence" value="ECO:0007005"/>
    <property type="project" value="SGD"/>
</dbReference>
<dbReference type="GO" id="GO:1990112">
    <property type="term" value="C:RQC complex"/>
    <property type="evidence" value="ECO:0000314"/>
    <property type="project" value="SGD"/>
</dbReference>
<dbReference type="GO" id="GO:0060090">
    <property type="term" value="F:molecular adaptor activity"/>
    <property type="evidence" value="ECO:0000314"/>
    <property type="project" value="UniProtKB"/>
</dbReference>
<dbReference type="GO" id="GO:0030674">
    <property type="term" value="F:protein-macromolecule adaptor activity"/>
    <property type="evidence" value="ECO:0000314"/>
    <property type="project" value="UniProt"/>
</dbReference>
<dbReference type="GO" id="GO:0072344">
    <property type="term" value="P:rescue of stalled ribosome"/>
    <property type="evidence" value="ECO:0000314"/>
    <property type="project" value="UniProtKB"/>
</dbReference>
<dbReference type="GO" id="GO:1990116">
    <property type="term" value="P:ribosome-associated ubiquitin-dependent protein catabolic process"/>
    <property type="evidence" value="ECO:0000314"/>
    <property type="project" value="UniProtKB"/>
</dbReference>
<dbReference type="InterPro" id="IPR006994">
    <property type="entry name" value="TCF25/Rqc1"/>
</dbReference>
<dbReference type="PANTHER" id="PTHR22684">
    <property type="entry name" value="NULP1-RELATED"/>
    <property type="match status" value="1"/>
</dbReference>
<dbReference type="PANTHER" id="PTHR22684:SF0">
    <property type="entry name" value="RIBOSOME QUALITY CONTROL COMPLEX SUBUNIT TCF25"/>
    <property type="match status" value="1"/>
</dbReference>
<dbReference type="Pfam" id="PF04910">
    <property type="entry name" value="Tcf25"/>
    <property type="match status" value="1"/>
</dbReference>
<evidence type="ECO:0000256" key="1">
    <source>
        <dbReference type="SAM" id="MobiDB-lite"/>
    </source>
</evidence>
<evidence type="ECO:0000269" key="2">
    <source>
    </source>
</evidence>
<evidence type="ECO:0000269" key="3">
    <source>
    </source>
</evidence>
<evidence type="ECO:0000269" key="4">
    <source>
    </source>
</evidence>
<evidence type="ECO:0000269" key="5">
    <source>
    </source>
</evidence>
<evidence type="ECO:0000269" key="6">
    <source>
    </source>
</evidence>
<evidence type="ECO:0000303" key="7">
    <source>
    </source>
</evidence>
<evidence type="ECO:0000305" key="8"/>
<evidence type="ECO:0000312" key="9">
    <source>
        <dbReference type="SGD" id="S000002741"/>
    </source>
</evidence>
<evidence type="ECO:0007744" key="10">
    <source>
    </source>
</evidence>
<evidence type="ECO:0007744" key="11">
    <source>
    </source>
</evidence>
<evidence type="ECO:0007744" key="12">
    <source>
    </source>
</evidence>
<evidence type="ECO:0007744" key="13">
    <source>
    </source>
</evidence>
<comment type="function">
    <text evidence="4 5 6">Component of the ribosome quality control complex (RQC), a ribosome-associated complex that mediates ubiquitination and extraction of incompletely synthesized nascent chains for proteasomal degradation (PubMed:23178123, PubMed:27129255). Within the RQC complex, RQC1 is essential for the recruitment of CDC48 to incompletely synthesized nascent polypeptides that are ubiquitinated by RKR1/LTN1 (PubMed:23479637, PubMed:27129255).</text>
</comment>
<comment type="subunit">
    <text evidence="4 5">Component of the ribosome quality control complex (RQC), composed of the E3 ubiquitin ligase RKR1/LTN1, RQC1 and RQC2, as well as CDC48 and its ubiquitin-binding cofactors. RQC forms a stable complex with 60S ribosomal subunits (PubMed:23178123, PubMed:23479637).</text>
</comment>
<comment type="subcellular location">
    <subcellularLocation>
        <location evidence="2">Cytoplasm</location>
    </subcellularLocation>
</comment>
<comment type="miscellaneous">
    <text evidence="3">Present with 339 molecules/cell in log phase SD medium.</text>
</comment>
<comment type="similarity">
    <text evidence="8">Belongs to the TCF25 family.</text>
</comment>
<feature type="chain" id="PRO_0000253842" description="Ribosome quality control complex subunit 1">
    <location>
        <begin position="1"/>
        <end position="723"/>
    </location>
</feature>
<feature type="region of interest" description="Disordered" evidence="1">
    <location>
        <begin position="21"/>
        <end position="125"/>
    </location>
</feature>
<feature type="compositionally biased region" description="Polar residues" evidence="1">
    <location>
        <begin position="27"/>
        <end position="37"/>
    </location>
</feature>
<feature type="compositionally biased region" description="Basic residues" evidence="1">
    <location>
        <begin position="93"/>
        <end position="108"/>
    </location>
</feature>
<feature type="compositionally biased region" description="Basic and acidic residues" evidence="1">
    <location>
        <begin position="109"/>
        <end position="118"/>
    </location>
</feature>
<feature type="modified residue" description="Phosphoserine" evidence="10 11 12 13">
    <location>
        <position position="119"/>
    </location>
</feature>
<feature type="modified residue" description="Phosphothreonine" evidence="11 13">
    <location>
        <position position="158"/>
    </location>
</feature>
<feature type="modified residue" description="Phosphoserine" evidence="11 13">
    <location>
        <position position="160"/>
    </location>
</feature>
<reference key="1">
    <citation type="journal article" date="1997" name="Nature">
        <title>The nucleotide sequence of Saccharomyces cerevisiae chromosome IV.</title>
        <authorList>
            <person name="Jacq C."/>
            <person name="Alt-Moerbe J."/>
            <person name="Andre B."/>
            <person name="Arnold W."/>
            <person name="Bahr A."/>
            <person name="Ballesta J.P.G."/>
            <person name="Bargues M."/>
            <person name="Baron L."/>
            <person name="Becker A."/>
            <person name="Biteau N."/>
            <person name="Bloecker H."/>
            <person name="Blugeon C."/>
            <person name="Boskovic J."/>
            <person name="Brandt P."/>
            <person name="Brueckner M."/>
            <person name="Buitrago M.J."/>
            <person name="Coster F."/>
            <person name="Delaveau T."/>
            <person name="del Rey F."/>
            <person name="Dujon B."/>
            <person name="Eide L.G."/>
            <person name="Garcia-Cantalejo J.M."/>
            <person name="Goffeau A."/>
            <person name="Gomez-Peris A."/>
            <person name="Granotier C."/>
            <person name="Hanemann V."/>
            <person name="Hankeln T."/>
            <person name="Hoheisel J.D."/>
            <person name="Jaeger W."/>
            <person name="Jimenez A."/>
            <person name="Jonniaux J.-L."/>
            <person name="Kraemer C."/>
            <person name="Kuester H."/>
            <person name="Laamanen P."/>
            <person name="Legros Y."/>
            <person name="Louis E.J."/>
            <person name="Moeller-Rieker S."/>
            <person name="Monnet A."/>
            <person name="Moro M."/>
            <person name="Mueller-Auer S."/>
            <person name="Nussbaumer B."/>
            <person name="Paricio N."/>
            <person name="Paulin L."/>
            <person name="Perea J."/>
            <person name="Perez-Alonso M."/>
            <person name="Perez-Ortin J.E."/>
            <person name="Pohl T.M."/>
            <person name="Prydz H."/>
            <person name="Purnelle B."/>
            <person name="Rasmussen S.W."/>
            <person name="Remacha M.A."/>
            <person name="Revuelta J.L."/>
            <person name="Rieger M."/>
            <person name="Salom D."/>
            <person name="Saluz H.P."/>
            <person name="Saiz J.E."/>
            <person name="Saren A.-M."/>
            <person name="Schaefer M."/>
            <person name="Scharfe M."/>
            <person name="Schmidt E.R."/>
            <person name="Schneider C."/>
            <person name="Scholler P."/>
            <person name="Schwarz S."/>
            <person name="Soler-Mira A."/>
            <person name="Urrestarazu L.A."/>
            <person name="Verhasselt P."/>
            <person name="Vissers S."/>
            <person name="Voet M."/>
            <person name="Volckaert G."/>
            <person name="Wagner G."/>
            <person name="Wambutt R."/>
            <person name="Wedler E."/>
            <person name="Wedler H."/>
            <person name="Woelfl S."/>
            <person name="Harris D.E."/>
            <person name="Bowman S."/>
            <person name="Brown D."/>
            <person name="Churcher C.M."/>
            <person name="Connor R."/>
            <person name="Dedman K."/>
            <person name="Gentles S."/>
            <person name="Hamlin N."/>
            <person name="Hunt S."/>
            <person name="Jones L."/>
            <person name="McDonald S."/>
            <person name="Murphy L.D."/>
            <person name="Niblett D."/>
            <person name="Odell C."/>
            <person name="Oliver K."/>
            <person name="Rajandream M.A."/>
            <person name="Richards C."/>
            <person name="Shore L."/>
            <person name="Walsh S.V."/>
            <person name="Barrell B.G."/>
            <person name="Dietrich F.S."/>
            <person name="Mulligan J.T."/>
            <person name="Allen E."/>
            <person name="Araujo R."/>
            <person name="Aviles E."/>
            <person name="Berno A."/>
            <person name="Carpenter J."/>
            <person name="Chen E."/>
            <person name="Cherry J.M."/>
            <person name="Chung E."/>
            <person name="Duncan M."/>
            <person name="Hunicke-Smith S."/>
            <person name="Hyman R.W."/>
            <person name="Komp C."/>
            <person name="Lashkari D."/>
            <person name="Lew H."/>
            <person name="Lin D."/>
            <person name="Mosedale D."/>
            <person name="Nakahara K."/>
            <person name="Namath A."/>
            <person name="Oefner P."/>
            <person name="Oh C."/>
            <person name="Petel F.X."/>
            <person name="Roberts D."/>
            <person name="Schramm S."/>
            <person name="Schroeder M."/>
            <person name="Shogren T."/>
            <person name="Shroff N."/>
            <person name="Winant A."/>
            <person name="Yelton M.A."/>
            <person name="Botstein D."/>
            <person name="Davis R.W."/>
            <person name="Johnston M."/>
            <person name="Andrews S."/>
            <person name="Brinkman R."/>
            <person name="Cooper J."/>
            <person name="Ding H."/>
            <person name="Du Z."/>
            <person name="Favello A."/>
            <person name="Fulton L."/>
            <person name="Gattung S."/>
            <person name="Greco T."/>
            <person name="Hallsworth K."/>
            <person name="Hawkins J."/>
            <person name="Hillier L.W."/>
            <person name="Jier M."/>
            <person name="Johnson D."/>
            <person name="Johnston L."/>
            <person name="Kirsten J."/>
            <person name="Kucaba T."/>
            <person name="Langston Y."/>
            <person name="Latreille P."/>
            <person name="Le T."/>
            <person name="Mardis E."/>
            <person name="Menezes S."/>
            <person name="Miller N."/>
            <person name="Nhan M."/>
            <person name="Pauley A."/>
            <person name="Peluso D."/>
            <person name="Rifkin L."/>
            <person name="Riles L."/>
            <person name="Taich A."/>
            <person name="Trevaskis E."/>
            <person name="Vignati D."/>
            <person name="Wilcox L."/>
            <person name="Wohldman P."/>
            <person name="Vaudin M."/>
            <person name="Wilson R."/>
            <person name="Waterston R."/>
            <person name="Albermann K."/>
            <person name="Hani J."/>
            <person name="Heumann K."/>
            <person name="Kleine K."/>
            <person name="Mewes H.-W."/>
            <person name="Zollner A."/>
            <person name="Zaccaria P."/>
        </authorList>
    </citation>
    <scope>NUCLEOTIDE SEQUENCE [LARGE SCALE GENOMIC DNA]</scope>
    <source>
        <strain>ATCC 204508 / S288c</strain>
    </source>
</reference>
<reference key="2">
    <citation type="journal article" date="2014" name="G3 (Bethesda)">
        <title>The reference genome sequence of Saccharomyces cerevisiae: Then and now.</title>
        <authorList>
            <person name="Engel S.R."/>
            <person name="Dietrich F.S."/>
            <person name="Fisk D.G."/>
            <person name="Binkley G."/>
            <person name="Balakrishnan R."/>
            <person name="Costanzo M.C."/>
            <person name="Dwight S.S."/>
            <person name="Hitz B.C."/>
            <person name="Karra K."/>
            <person name="Nash R.S."/>
            <person name="Weng S."/>
            <person name="Wong E.D."/>
            <person name="Lloyd P."/>
            <person name="Skrzypek M.S."/>
            <person name="Miyasato S.R."/>
            <person name="Simison M."/>
            <person name="Cherry J.M."/>
        </authorList>
    </citation>
    <scope>GENOME REANNOTATION</scope>
    <source>
        <strain>ATCC 204508 / S288c</strain>
    </source>
</reference>
<reference key="3">
    <citation type="journal article" date="2003" name="Nature">
        <title>Global analysis of protein localization in budding yeast.</title>
        <authorList>
            <person name="Huh W.-K."/>
            <person name="Falvo J.V."/>
            <person name="Gerke L.C."/>
            <person name="Carroll A.S."/>
            <person name="Howson R.W."/>
            <person name="Weissman J.S."/>
            <person name="O'Shea E.K."/>
        </authorList>
    </citation>
    <scope>SUBCELLULAR LOCATION [LARGE SCALE ANALYSIS]</scope>
</reference>
<reference key="4">
    <citation type="journal article" date="2003" name="Nature">
        <title>Global analysis of protein expression in yeast.</title>
        <authorList>
            <person name="Ghaemmaghami S."/>
            <person name="Huh W.-K."/>
            <person name="Bower K."/>
            <person name="Howson R.W."/>
            <person name="Belle A."/>
            <person name="Dephoure N."/>
            <person name="O'Shea E.K."/>
            <person name="Weissman J.S."/>
        </authorList>
    </citation>
    <scope>LEVEL OF PROTEIN EXPRESSION [LARGE SCALE ANALYSIS]</scope>
</reference>
<reference key="5">
    <citation type="journal article" date="2007" name="J. Proteome Res.">
        <title>Large-scale phosphorylation analysis of alpha-factor-arrested Saccharomyces cerevisiae.</title>
        <authorList>
            <person name="Li X."/>
            <person name="Gerber S.A."/>
            <person name="Rudner A.D."/>
            <person name="Beausoleil S.A."/>
            <person name="Haas W."/>
            <person name="Villen J."/>
            <person name="Elias J.E."/>
            <person name="Gygi S.P."/>
        </authorList>
    </citation>
    <scope>PHOSPHORYLATION [LARGE SCALE ANALYSIS] AT SER-119; THR-158 AND SER-160</scope>
    <scope>IDENTIFICATION BY MASS SPECTROMETRY [LARGE SCALE ANALYSIS]</scope>
    <source>
        <strain>ADR376</strain>
    </source>
</reference>
<reference key="6">
    <citation type="journal article" date="2007" name="Proc. Natl. Acad. Sci. U.S.A.">
        <title>Analysis of phosphorylation sites on proteins from Saccharomyces cerevisiae by electron transfer dissociation (ETD) mass spectrometry.</title>
        <authorList>
            <person name="Chi A."/>
            <person name="Huttenhower C."/>
            <person name="Geer L.Y."/>
            <person name="Coon J.J."/>
            <person name="Syka J.E.P."/>
            <person name="Bai D.L."/>
            <person name="Shabanowitz J."/>
            <person name="Burke D.J."/>
            <person name="Troyanskaya O.G."/>
            <person name="Hunt D.F."/>
        </authorList>
    </citation>
    <scope>PHOSPHORYLATION [LARGE SCALE ANALYSIS] AT SER-119</scope>
    <scope>IDENTIFICATION BY MASS SPECTROMETRY [LARGE SCALE ANALYSIS]</scope>
</reference>
<reference key="7">
    <citation type="journal article" date="2008" name="Mol. Cell. Proteomics">
        <title>A multidimensional chromatography technology for in-depth phosphoproteome analysis.</title>
        <authorList>
            <person name="Albuquerque C.P."/>
            <person name="Smolka M.B."/>
            <person name="Payne S.H."/>
            <person name="Bafna V."/>
            <person name="Eng J."/>
            <person name="Zhou H."/>
        </authorList>
    </citation>
    <scope>PHOSPHORYLATION [LARGE SCALE ANALYSIS] AT SER-119</scope>
    <scope>IDENTIFICATION BY MASS SPECTROMETRY [LARGE SCALE ANALYSIS]</scope>
</reference>
<reference key="8">
    <citation type="journal article" date="2009" name="Science">
        <title>Global analysis of Cdk1 substrate phosphorylation sites provides insights into evolution.</title>
        <authorList>
            <person name="Holt L.J."/>
            <person name="Tuch B.B."/>
            <person name="Villen J."/>
            <person name="Johnson A.D."/>
            <person name="Gygi S.P."/>
            <person name="Morgan D.O."/>
        </authorList>
    </citation>
    <scope>PHOSPHORYLATION [LARGE SCALE ANALYSIS] AT SER-119; THR-158 AND SER-160</scope>
    <scope>IDENTIFICATION BY MASS SPECTROMETRY [LARGE SCALE ANALYSIS]</scope>
</reference>
<reference key="9">
    <citation type="journal article" date="2012" name="Cell">
        <title>A ribosome-bound quality control complex triggers degradation of nascent peptides and signals translation stress.</title>
        <authorList>
            <person name="Brandman O."/>
            <person name="Stewart-Ornstein J."/>
            <person name="Wong D."/>
            <person name="Larson A."/>
            <person name="Williams C.C."/>
            <person name="Li G.W."/>
            <person name="Zhou S."/>
            <person name="King D."/>
            <person name="Shen P.S."/>
            <person name="Weibezahn J."/>
            <person name="Dunn J.G."/>
            <person name="Rouskin S."/>
            <person name="Inada T."/>
            <person name="Frost A."/>
            <person name="Weissman J.S."/>
        </authorList>
    </citation>
    <scope>FUNCTION</scope>
    <scope>SUBUNIT</scope>
</reference>
<reference key="10">
    <citation type="journal article" date="2013" name="Proc. Natl. Acad. Sci. U.S.A.">
        <title>Cdc48-associated complex bound to 60S particles is required for the clearance of aberrant translation products.</title>
        <authorList>
            <person name="Defenouillere Q."/>
            <person name="Yao Y."/>
            <person name="Mouaikel J."/>
            <person name="Namane A."/>
            <person name="Galopier A."/>
            <person name="Decourty L."/>
            <person name="Doyen A."/>
            <person name="Malabat C."/>
            <person name="Saveanu C."/>
            <person name="Jacquier A."/>
            <person name="Fromont-Racine M."/>
        </authorList>
    </citation>
    <scope>FUNCTION</scope>
    <scope>SUBUNIT</scope>
</reference>
<reference key="11">
    <citation type="journal article" date="2016" name="J. Biol. Chem.">
        <title>Rqc1 and Ltn1 prevent C-terminal alanine-threonine tail (CAT-tail)-induced protein aggregation by efficient recruitment of Cdc48 on stalled 60S subunits.</title>
        <authorList>
            <person name="Defenouillere Q."/>
            <person name="Zhang E."/>
            <person name="Namane A."/>
            <person name="Mouaikel J."/>
            <person name="Jacquier A."/>
            <person name="Fromont-Racine M."/>
        </authorList>
    </citation>
    <scope>FUNCTION</scope>
</reference>
<gene>
    <name evidence="7" type="primary">RQC1</name>
    <name evidence="9" type="ordered locus">YDR333C</name>
</gene>
<proteinExistence type="evidence at protein level"/>
<protein>
    <recommendedName>
        <fullName evidence="7">Ribosome quality control complex subunit 1</fullName>
    </recommendedName>
</protein>
<name>RQC1_YEAST</name>
<sequence length="723" mass="83426">MSSRALRRLQDDNALLESLLSNSNANKMTSGKSTAGNIQKRENIFSMMNNVRDSDNSTDEGQMSEQDEEAAAAGERDTQSNGQPKRITLASKSSRRKKNKKAKRKQKNHTAEAAKDKGSDDDDDDEEFDKIIQQFKKTDILKYGKTKNDDTNEEGFFTASEPEEASSQPWKSFLSLESDPGFTKFPISCLRHSCKFFQNDFKKLDPHTEFKLLFDDISPESLEDIDSMTSTPVSPQQLKQIQRLKRLIRNWGGKDHRLAPNGPGMHPQHLKFTKIRDDWIPTQRGELSMKLLSSDDLLDWQLWERPLDWKDVIQNDVSQWQKFISFYKFEPLNSDLSKKSMMDFYLSVIVHPDHEALINLISSKFPYHVPGLLQVALIFIRQGDRSNTNGLLQRALFVFDRALKANIIFDSLNCQLPYIYFFNRQFYLAIFRYIQSLAQRGVIGTASEWTKVLWSLSPLEDPLGCRYFLDHYFLLNNDYQYIIELSNSPLMNCYKQWNTLGFSLAVVLSFLRINEMSSARNALLKAFKHHPLQLSELFKEKLLGDHALTKDLSIDGHSAENLELKAYMARFPLLWNRNEEVTFLHDEMSSILQDYHRGNVTIDSNDGQDHNNINNLQSPFFIAGIPINLLRFAILSEESSVMAAIPSFIWSDNEVYEFDVLPPMPTSKESIEVVENIKTFINEKDLAVLQAERMQDEDLLNQIRQISLQQYIHENEESNENEG</sequence>
<accession>Q05468</accession>
<accession>D6VSW5</accession>